<evidence type="ECO:0000255" key="1">
    <source>
        <dbReference type="HAMAP-Rule" id="MF_00265"/>
    </source>
</evidence>
<evidence type="ECO:0000269" key="2">
    <source>
    </source>
</evidence>
<evidence type="ECO:0000269" key="3">
    <source>
    </source>
</evidence>
<accession>P9WFB7</accession>
<accession>L0T708</accession>
<accession>O06415</accession>
<accession>Q7D9N6</accession>
<proteinExistence type="evidence at protein level"/>
<protein>
    <recommendedName>
        <fullName evidence="1">Ribonuclease VapC3</fullName>
        <shortName evidence="1">RNase VapC3</shortName>
        <ecNumber evidence="1">3.1.-.-</ecNumber>
    </recommendedName>
    <alternativeName>
        <fullName evidence="1">Toxin VapC3</fullName>
    </alternativeName>
</protein>
<keyword id="KW-0378">Hydrolase</keyword>
<keyword id="KW-0460">Magnesium</keyword>
<keyword id="KW-0479">Metal-binding</keyword>
<keyword id="KW-0540">Nuclease</keyword>
<keyword id="KW-1185">Reference proteome</keyword>
<keyword id="KW-1277">Toxin-antitoxin system</keyword>
<feature type="chain" id="PRO_0000407866" description="Ribonuclease VapC3">
    <location>
        <begin position="1"/>
        <end position="137"/>
    </location>
</feature>
<feature type="domain" description="PINc" evidence="1">
    <location>
        <begin position="12"/>
        <end position="129"/>
    </location>
</feature>
<feature type="binding site" evidence="1">
    <location>
        <position position="15"/>
    </location>
    <ligand>
        <name>Mg(2+)</name>
        <dbReference type="ChEBI" id="CHEBI:18420"/>
    </ligand>
</feature>
<feature type="binding site" evidence="1">
    <location>
        <position position="105"/>
    </location>
    <ligand>
        <name>Mg(2+)</name>
        <dbReference type="ChEBI" id="CHEBI:18420"/>
    </ligand>
</feature>
<gene>
    <name evidence="1" type="primary">vapC3</name>
    <name type="ordered locus">Rv0549c</name>
</gene>
<organism>
    <name type="scientific">Mycobacterium tuberculosis (strain ATCC 25618 / H37Rv)</name>
    <dbReference type="NCBI Taxonomy" id="83332"/>
    <lineage>
        <taxon>Bacteria</taxon>
        <taxon>Bacillati</taxon>
        <taxon>Actinomycetota</taxon>
        <taxon>Actinomycetes</taxon>
        <taxon>Mycobacteriales</taxon>
        <taxon>Mycobacteriaceae</taxon>
        <taxon>Mycobacterium</taxon>
        <taxon>Mycobacterium tuberculosis complex</taxon>
    </lineage>
</organism>
<dbReference type="EC" id="3.1.-.-" evidence="1"/>
<dbReference type="EMBL" id="AL123456">
    <property type="protein sequence ID" value="CCP43287.1"/>
    <property type="molecule type" value="Genomic_DNA"/>
</dbReference>
<dbReference type="PIR" id="H70547">
    <property type="entry name" value="H70547"/>
</dbReference>
<dbReference type="RefSeq" id="NP_215063.1">
    <property type="nucleotide sequence ID" value="NC_000962.3"/>
</dbReference>
<dbReference type="RefSeq" id="WP_003898500.1">
    <property type="nucleotide sequence ID" value="NZ_NVQJ01000036.1"/>
</dbReference>
<dbReference type="SMR" id="P9WFB7"/>
<dbReference type="STRING" id="83332.Rv0549c"/>
<dbReference type="PaxDb" id="83332-Rv0549c"/>
<dbReference type="DNASU" id="887534"/>
<dbReference type="GeneID" id="887534"/>
<dbReference type="KEGG" id="mtu:Rv0549c"/>
<dbReference type="KEGG" id="mtv:RVBD_0549c"/>
<dbReference type="TubercuList" id="Rv0549c"/>
<dbReference type="eggNOG" id="COG4113">
    <property type="taxonomic scope" value="Bacteria"/>
</dbReference>
<dbReference type="InParanoid" id="P9WFB7"/>
<dbReference type="OrthoDB" id="4377304at2"/>
<dbReference type="PhylomeDB" id="P9WFB7"/>
<dbReference type="Proteomes" id="UP000001584">
    <property type="component" value="Chromosome"/>
</dbReference>
<dbReference type="GO" id="GO:0000287">
    <property type="term" value="F:magnesium ion binding"/>
    <property type="evidence" value="ECO:0007669"/>
    <property type="project" value="UniProtKB-UniRule"/>
</dbReference>
<dbReference type="GO" id="GO:0004540">
    <property type="term" value="F:RNA nuclease activity"/>
    <property type="evidence" value="ECO:0007669"/>
    <property type="project" value="InterPro"/>
</dbReference>
<dbReference type="GO" id="GO:0045927">
    <property type="term" value="P:positive regulation of growth"/>
    <property type="evidence" value="ECO:0000315"/>
    <property type="project" value="MTBBASE"/>
</dbReference>
<dbReference type="GO" id="GO:0075136">
    <property type="term" value="P:response to host"/>
    <property type="evidence" value="ECO:0000270"/>
    <property type="project" value="MTBBASE"/>
</dbReference>
<dbReference type="CDD" id="cd09873">
    <property type="entry name" value="PIN_Pae0151-like"/>
    <property type="match status" value="1"/>
</dbReference>
<dbReference type="Gene3D" id="3.40.50.1010">
    <property type="entry name" value="5'-nuclease"/>
    <property type="match status" value="1"/>
</dbReference>
<dbReference type="HAMAP" id="MF_00265">
    <property type="entry name" value="VapC_Nob1"/>
    <property type="match status" value="1"/>
</dbReference>
<dbReference type="InterPro" id="IPR029060">
    <property type="entry name" value="PIN-like_dom_sf"/>
</dbReference>
<dbReference type="InterPro" id="IPR002716">
    <property type="entry name" value="PIN_dom"/>
</dbReference>
<dbReference type="InterPro" id="IPR044153">
    <property type="entry name" value="PIN_Pae0151-like"/>
</dbReference>
<dbReference type="InterPro" id="IPR051619">
    <property type="entry name" value="TypeII_TA_RNase_PINc/VapC"/>
</dbReference>
<dbReference type="InterPro" id="IPR022907">
    <property type="entry name" value="VapC_family"/>
</dbReference>
<dbReference type="PANTHER" id="PTHR35901:SF1">
    <property type="entry name" value="EXONUCLEASE VAPC9"/>
    <property type="match status" value="1"/>
</dbReference>
<dbReference type="PANTHER" id="PTHR35901">
    <property type="entry name" value="RIBONUCLEASE VAPC3"/>
    <property type="match status" value="1"/>
</dbReference>
<dbReference type="Pfam" id="PF01850">
    <property type="entry name" value="PIN"/>
    <property type="match status" value="1"/>
</dbReference>
<dbReference type="SUPFAM" id="SSF88723">
    <property type="entry name" value="PIN domain-like"/>
    <property type="match status" value="1"/>
</dbReference>
<comment type="function">
    <text evidence="1 2">Toxic component of a type II toxin-antitoxin (TA) system. An RNase (By similarity). Upon expression in M.smegmatis inhibits colony formation. Its toxic effect is neutralized by coexpression with cognate antitoxin VapB3.</text>
</comment>
<comment type="cofactor">
    <cofactor evidence="1">
        <name>Mg(2+)</name>
        <dbReference type="ChEBI" id="CHEBI:18420"/>
    </cofactor>
</comment>
<comment type="induction">
    <text evidence="2 3">Induced during infection of mouse macrophages (PubMed:20011113). Induced in persister cells in response to D-cycloserine (PubMed:21673191).</text>
</comment>
<comment type="similarity">
    <text evidence="1">Belongs to the PINc/VapC protein family.</text>
</comment>
<name>VAPC3_MYCTU</name>
<sequence>MRASPTSPPEQVVVDASAMVDLLARTSDRCSAVRARLARTAMHAPAHFDAEVLSALGRMQRAGALTVAYVDAALEELRQVPVTRHGLSSLLAGAWSRRDTLRLTDALYVELAETAGLVLLTTDERLARAWPSAHAIG</sequence>
<reference key="1">
    <citation type="journal article" date="1998" name="Nature">
        <title>Deciphering the biology of Mycobacterium tuberculosis from the complete genome sequence.</title>
        <authorList>
            <person name="Cole S.T."/>
            <person name="Brosch R."/>
            <person name="Parkhill J."/>
            <person name="Garnier T."/>
            <person name="Churcher C.M."/>
            <person name="Harris D.E."/>
            <person name="Gordon S.V."/>
            <person name="Eiglmeier K."/>
            <person name="Gas S."/>
            <person name="Barry C.E. III"/>
            <person name="Tekaia F."/>
            <person name="Badcock K."/>
            <person name="Basham D."/>
            <person name="Brown D."/>
            <person name="Chillingworth T."/>
            <person name="Connor R."/>
            <person name="Davies R.M."/>
            <person name="Devlin K."/>
            <person name="Feltwell T."/>
            <person name="Gentles S."/>
            <person name="Hamlin N."/>
            <person name="Holroyd S."/>
            <person name="Hornsby T."/>
            <person name="Jagels K."/>
            <person name="Krogh A."/>
            <person name="McLean J."/>
            <person name="Moule S."/>
            <person name="Murphy L.D."/>
            <person name="Oliver S."/>
            <person name="Osborne J."/>
            <person name="Quail M.A."/>
            <person name="Rajandream M.A."/>
            <person name="Rogers J."/>
            <person name="Rutter S."/>
            <person name="Seeger K."/>
            <person name="Skelton S."/>
            <person name="Squares S."/>
            <person name="Squares R."/>
            <person name="Sulston J.E."/>
            <person name="Taylor K."/>
            <person name="Whitehead S."/>
            <person name="Barrell B.G."/>
        </authorList>
    </citation>
    <scope>NUCLEOTIDE SEQUENCE [LARGE SCALE GENOMIC DNA]</scope>
    <source>
        <strain>ATCC 25618 / H37Rv</strain>
    </source>
</reference>
<reference key="2">
    <citation type="journal article" date="2005" name="Nucleic Acids Res.">
        <title>Toxin-antitoxin loci are highly abundant in free-living but lost from host-associated prokaryotes.</title>
        <authorList>
            <person name="Pandey D.P."/>
            <person name="Gerdes K."/>
        </authorList>
    </citation>
    <scope>POSSIBLE FUNCTION</scope>
    <source>
        <strain>ATCC 25618 / H37Rv</strain>
    </source>
</reference>
<reference key="3">
    <citation type="journal article" date="2009" name="PLoS Genet.">
        <title>Comprehensive functional analysis of Mycobacterium tuberculosis toxin-antitoxin systems: implications for pathogenesis, stress responses, and evolution.</title>
        <authorList>
            <person name="Ramage H.R."/>
            <person name="Connolly L.E."/>
            <person name="Cox J.S."/>
        </authorList>
    </citation>
    <scope>EXPRESSION IN M.SMEGMATIS</scope>
    <scope>FUNCTION AS A TOXIN</scope>
    <scope>INDUCTION DURING MACROPHAGE INFECTION</scope>
    <source>
        <strain>ATCC 35801 / TMC 107 / Erdman</strain>
    </source>
</reference>
<reference key="4">
    <citation type="journal article" date="2011" name="MBio">
        <title>Characterization and transcriptome analysis of Mycobacterium tuberculosis persisters.</title>
        <authorList>
            <person name="Keren I."/>
            <person name="Minami S."/>
            <person name="Rubin E."/>
            <person name="Lewis K."/>
        </authorList>
    </citation>
    <scope>INDUCTION IN PERSISTER CELLS</scope>
    <source>
        <strain>ATCC 25618 / H37Rv</strain>
    </source>
</reference>
<reference key="5">
    <citation type="journal article" date="2011" name="Mol. Cell. Proteomics">
        <title>Proteogenomic analysis of Mycobacterium tuberculosis by high resolution mass spectrometry.</title>
        <authorList>
            <person name="Kelkar D.S."/>
            <person name="Kumar D."/>
            <person name="Kumar P."/>
            <person name="Balakrishnan L."/>
            <person name="Muthusamy B."/>
            <person name="Yadav A.K."/>
            <person name="Shrivastava P."/>
            <person name="Marimuthu A."/>
            <person name="Anand S."/>
            <person name="Sundaram H."/>
            <person name="Kingsbury R."/>
            <person name="Harsha H.C."/>
            <person name="Nair B."/>
            <person name="Prasad T.S."/>
            <person name="Chauhan D.S."/>
            <person name="Katoch K."/>
            <person name="Katoch V.M."/>
            <person name="Kumar P."/>
            <person name="Chaerkady R."/>
            <person name="Ramachandran S."/>
            <person name="Dash D."/>
            <person name="Pandey A."/>
        </authorList>
    </citation>
    <scope>IDENTIFICATION BY MASS SPECTROMETRY [LARGE SCALE ANALYSIS]</scope>
    <source>
        <strain>ATCC 25618 / H37Rv</strain>
    </source>
</reference>